<sequence length="48" mass="5548">MRVKINLECSECGSNNYLTSKNKSSHPEKIKVPKYCPKERKVTLHVET</sequence>
<feature type="chain" id="PRO_0000356718" description="Large ribosomal subunit protein bL33A">
    <location>
        <begin position="1"/>
        <end position="48"/>
    </location>
</feature>
<organism>
    <name type="scientific">Streptococcus pyogenes serotype M12 (strain MGAS2096)</name>
    <dbReference type="NCBI Taxonomy" id="370553"/>
    <lineage>
        <taxon>Bacteria</taxon>
        <taxon>Bacillati</taxon>
        <taxon>Bacillota</taxon>
        <taxon>Bacilli</taxon>
        <taxon>Lactobacillales</taxon>
        <taxon>Streptococcaceae</taxon>
        <taxon>Streptococcus</taxon>
    </lineage>
</organism>
<gene>
    <name evidence="1" type="primary">rpmG1</name>
    <name type="ordered locus">MGAS2096_Spy0431</name>
</gene>
<proteinExistence type="inferred from homology"/>
<accession>Q1JD25</accession>
<dbReference type="EMBL" id="CP000261">
    <property type="protein sequence ID" value="ABF35483.1"/>
    <property type="molecule type" value="Genomic_DNA"/>
</dbReference>
<dbReference type="SMR" id="Q1JD25"/>
<dbReference type="KEGG" id="spj:MGAS2096_Spy0431"/>
<dbReference type="HOGENOM" id="CLU_190949_0_2_9"/>
<dbReference type="GO" id="GO:0005737">
    <property type="term" value="C:cytoplasm"/>
    <property type="evidence" value="ECO:0007669"/>
    <property type="project" value="UniProtKB-ARBA"/>
</dbReference>
<dbReference type="GO" id="GO:1990904">
    <property type="term" value="C:ribonucleoprotein complex"/>
    <property type="evidence" value="ECO:0007669"/>
    <property type="project" value="UniProtKB-KW"/>
</dbReference>
<dbReference type="GO" id="GO:0005840">
    <property type="term" value="C:ribosome"/>
    <property type="evidence" value="ECO:0007669"/>
    <property type="project" value="UniProtKB-KW"/>
</dbReference>
<dbReference type="GO" id="GO:0003735">
    <property type="term" value="F:structural constituent of ribosome"/>
    <property type="evidence" value="ECO:0007669"/>
    <property type="project" value="InterPro"/>
</dbReference>
<dbReference type="GO" id="GO:0006412">
    <property type="term" value="P:translation"/>
    <property type="evidence" value="ECO:0007669"/>
    <property type="project" value="UniProtKB-UniRule"/>
</dbReference>
<dbReference type="Gene3D" id="2.20.28.120">
    <property type="entry name" value="Ribosomal protein L33"/>
    <property type="match status" value="1"/>
</dbReference>
<dbReference type="HAMAP" id="MF_00294">
    <property type="entry name" value="Ribosomal_bL33"/>
    <property type="match status" value="1"/>
</dbReference>
<dbReference type="InterPro" id="IPR001705">
    <property type="entry name" value="Ribosomal_bL33"/>
</dbReference>
<dbReference type="InterPro" id="IPR038584">
    <property type="entry name" value="Ribosomal_bL33_sf"/>
</dbReference>
<dbReference type="InterPro" id="IPR011332">
    <property type="entry name" value="Ribosomal_zn-bd"/>
</dbReference>
<dbReference type="NCBIfam" id="NF001764">
    <property type="entry name" value="PRK00504.1"/>
    <property type="match status" value="1"/>
</dbReference>
<dbReference type="NCBIfam" id="NF001860">
    <property type="entry name" value="PRK00595.1"/>
    <property type="match status" value="1"/>
</dbReference>
<dbReference type="NCBIfam" id="TIGR01023">
    <property type="entry name" value="rpmG_bact"/>
    <property type="match status" value="1"/>
</dbReference>
<dbReference type="PANTHER" id="PTHR43168">
    <property type="entry name" value="50S RIBOSOMAL PROTEIN L33, CHLOROPLASTIC"/>
    <property type="match status" value="1"/>
</dbReference>
<dbReference type="PANTHER" id="PTHR43168:SF6">
    <property type="entry name" value="LARGE RIBOSOMAL SUBUNIT PROTEIN BL33A"/>
    <property type="match status" value="1"/>
</dbReference>
<dbReference type="Pfam" id="PF00471">
    <property type="entry name" value="Ribosomal_L33"/>
    <property type="match status" value="1"/>
</dbReference>
<dbReference type="SUPFAM" id="SSF57829">
    <property type="entry name" value="Zn-binding ribosomal proteins"/>
    <property type="match status" value="1"/>
</dbReference>
<name>RL331_STRPB</name>
<reference key="1">
    <citation type="journal article" date="2006" name="Proc. Natl. Acad. Sci. U.S.A.">
        <title>Molecular genetic anatomy of inter- and intraserotype variation in the human bacterial pathogen group A Streptococcus.</title>
        <authorList>
            <person name="Beres S.B."/>
            <person name="Richter E.W."/>
            <person name="Nagiec M.J."/>
            <person name="Sumby P."/>
            <person name="Porcella S.F."/>
            <person name="DeLeo F.R."/>
            <person name="Musser J.M."/>
        </authorList>
    </citation>
    <scope>NUCLEOTIDE SEQUENCE [LARGE SCALE GENOMIC DNA]</scope>
    <source>
        <strain>MGAS2096</strain>
    </source>
</reference>
<comment type="similarity">
    <text evidence="1">Belongs to the bacterial ribosomal protein bL33 family.</text>
</comment>
<evidence type="ECO:0000255" key="1">
    <source>
        <dbReference type="HAMAP-Rule" id="MF_00294"/>
    </source>
</evidence>
<protein>
    <recommendedName>
        <fullName evidence="1">Large ribosomal subunit protein bL33A</fullName>
    </recommendedName>
    <alternativeName>
        <fullName evidence="1">50S ribosomal protein L33 1</fullName>
    </alternativeName>
</protein>
<keyword id="KW-0687">Ribonucleoprotein</keyword>
<keyword id="KW-0689">Ribosomal protein</keyword>